<evidence type="ECO:0000250" key="1"/>
<evidence type="ECO:0000269" key="2">
    <source>
    </source>
</evidence>
<evidence type="ECO:0000305" key="3"/>
<evidence type="ECO:0007744" key="4">
    <source>
    </source>
</evidence>
<sequence>MDLCFQNPVKCGDRLFSALNTSTYYKLGTSNLGFNGPVLENRKKKKKLPRMVTVKSVSSSVVASTVQGTKRDGGESLYDAIVIGSGIGGLVAATQLAVKEARVLVLEKYLIPGGSSGFYERDGYTFDVGSSVMFGFSDKGNLNLITQALKAVGRKMEVIPDPTTVHFHLPNNLSVRIHREYDDFIAELTSKFPHEKEGILGFYGDCWKIFNSLNSLELKSLEEPIYLFGQFFQKPLECLTLAYYLPQNAGAIARKYIKDPQLLSFIDAECFIVSTVNALQTPMINASMVLCDRHYGGINYPVGGVGGIAKSLAEGLVDQGSEIQYKANVKSIILDHGKAVGVRLADGREFFAKTIISNATRWDTFGKLLKGEKLPKEEENFQKVYVKAPSFLSIHMGVKAEVLPPDTDCHHFVLEDDWKNLEEPYGSIFLSIPTILDSSLAPDGRHILHIFTTSSIEDWEGLPPKEYEAKKEDVAARIIQRLEKKLFPGLSSSITFKEVGTPRTHRRFLARDKGTYGPMPRGTPKGLLGMPFNTTAIDGLYCVGDSCFPGQGVIAVAFSGVMCAHRVAADIGLEKKSRVLDVGLLGLLGWLRTLA</sequence>
<gene>
    <name type="primary">CRTISO</name>
    <name type="synonym">CCR2</name>
    <name type="ordered locus">At1g06820</name>
    <name type="ORF">F4H5.10</name>
</gene>
<name>CRTSO_ARATH</name>
<protein>
    <recommendedName>
        <fullName>Prolycopene isomerase, chloroplastic</fullName>
        <shortName>CrtISO</shortName>
        <ecNumber>5.2.1.13</ecNumber>
    </recommendedName>
    <alternativeName>
        <fullName>Carotenoid and chloroplast regulation protein 2</fullName>
    </alternativeName>
    <alternativeName>
        <fullName>Carotenoid isomerase</fullName>
    </alternativeName>
</protein>
<reference key="1">
    <citation type="journal article" date="2000" name="Nature">
        <title>Sequence and analysis of chromosome 1 of the plant Arabidopsis thaliana.</title>
        <authorList>
            <person name="Theologis A."/>
            <person name="Ecker J.R."/>
            <person name="Palm C.J."/>
            <person name="Federspiel N.A."/>
            <person name="Kaul S."/>
            <person name="White O."/>
            <person name="Alonso J."/>
            <person name="Altafi H."/>
            <person name="Araujo R."/>
            <person name="Bowman C.L."/>
            <person name="Brooks S.Y."/>
            <person name="Buehler E."/>
            <person name="Chan A."/>
            <person name="Chao Q."/>
            <person name="Chen H."/>
            <person name="Cheuk R.F."/>
            <person name="Chin C.W."/>
            <person name="Chung M.K."/>
            <person name="Conn L."/>
            <person name="Conway A.B."/>
            <person name="Conway A.R."/>
            <person name="Creasy T.H."/>
            <person name="Dewar K."/>
            <person name="Dunn P."/>
            <person name="Etgu P."/>
            <person name="Feldblyum T.V."/>
            <person name="Feng J.-D."/>
            <person name="Fong B."/>
            <person name="Fujii C.Y."/>
            <person name="Gill J.E."/>
            <person name="Goldsmith A.D."/>
            <person name="Haas B."/>
            <person name="Hansen N.F."/>
            <person name="Hughes B."/>
            <person name="Huizar L."/>
            <person name="Hunter J.L."/>
            <person name="Jenkins J."/>
            <person name="Johnson-Hopson C."/>
            <person name="Khan S."/>
            <person name="Khaykin E."/>
            <person name="Kim C.J."/>
            <person name="Koo H.L."/>
            <person name="Kremenetskaia I."/>
            <person name="Kurtz D.B."/>
            <person name="Kwan A."/>
            <person name="Lam B."/>
            <person name="Langin-Hooper S."/>
            <person name="Lee A."/>
            <person name="Lee J.M."/>
            <person name="Lenz C.A."/>
            <person name="Li J.H."/>
            <person name="Li Y.-P."/>
            <person name="Lin X."/>
            <person name="Liu S.X."/>
            <person name="Liu Z.A."/>
            <person name="Luros J.S."/>
            <person name="Maiti R."/>
            <person name="Marziali A."/>
            <person name="Militscher J."/>
            <person name="Miranda M."/>
            <person name="Nguyen M."/>
            <person name="Nierman W.C."/>
            <person name="Osborne B.I."/>
            <person name="Pai G."/>
            <person name="Peterson J."/>
            <person name="Pham P.K."/>
            <person name="Rizzo M."/>
            <person name="Rooney T."/>
            <person name="Rowley D."/>
            <person name="Sakano H."/>
            <person name="Salzberg S.L."/>
            <person name="Schwartz J.R."/>
            <person name="Shinn P."/>
            <person name="Southwick A.M."/>
            <person name="Sun H."/>
            <person name="Tallon L.J."/>
            <person name="Tambunga G."/>
            <person name="Toriumi M.J."/>
            <person name="Town C.D."/>
            <person name="Utterback T."/>
            <person name="Van Aken S."/>
            <person name="Vaysberg M."/>
            <person name="Vysotskaia V.S."/>
            <person name="Walker M."/>
            <person name="Wu D."/>
            <person name="Yu G."/>
            <person name="Fraser C.M."/>
            <person name="Venter J.C."/>
            <person name="Davis R.W."/>
        </authorList>
    </citation>
    <scope>NUCLEOTIDE SEQUENCE [LARGE SCALE GENOMIC DNA]</scope>
    <source>
        <strain>cv. Columbia</strain>
    </source>
</reference>
<reference key="2">
    <citation type="journal article" date="2017" name="Plant J.">
        <title>Araport11: a complete reannotation of the Arabidopsis thaliana reference genome.</title>
        <authorList>
            <person name="Cheng C.Y."/>
            <person name="Krishnakumar V."/>
            <person name="Chan A.P."/>
            <person name="Thibaud-Nissen F."/>
            <person name="Schobel S."/>
            <person name="Town C.D."/>
        </authorList>
    </citation>
    <scope>GENOME REANNOTATION</scope>
    <source>
        <strain>cv. Columbia</strain>
    </source>
</reference>
<reference key="3">
    <citation type="journal article" date="2004" name="Genome Res.">
        <title>Whole genome sequence comparisons and 'full-length' cDNA sequences: a combined approach to evaluate and improve Arabidopsis genome annotation.</title>
        <authorList>
            <person name="Castelli V."/>
            <person name="Aury J.-M."/>
            <person name="Jaillon O."/>
            <person name="Wincker P."/>
            <person name="Clepet C."/>
            <person name="Menard M."/>
            <person name="Cruaud C."/>
            <person name="Quetier F."/>
            <person name="Scarpelli C."/>
            <person name="Schaechter V."/>
            <person name="Temple G."/>
            <person name="Caboche M."/>
            <person name="Weissenbach J."/>
            <person name="Salanoubat M."/>
        </authorList>
    </citation>
    <scope>NUCLEOTIDE SEQUENCE [LARGE SCALE MRNA]</scope>
    <source>
        <strain>cv. Columbia</strain>
    </source>
</reference>
<reference key="4">
    <citation type="journal article" date="2002" name="Plant Cell">
        <title>Identification of the carotenoid isomerase provides insight into carotenoid biosynthesis, prolamellar body formation, and photomorphogenesis.</title>
        <authorList>
            <person name="Park H."/>
            <person name="Kreunen S.S."/>
            <person name="Cuttriss A.J."/>
            <person name="DellaPenna D."/>
            <person name="Pogson B.J."/>
        </authorList>
    </citation>
    <scope>FUNCTION</scope>
    <scope>PATHWAY</scope>
    <scope>ENZYME ACTIVITY</scope>
</reference>
<reference key="5">
    <citation type="journal article" date="2012" name="Mol. Cell. Proteomics">
        <title>Comparative large-scale characterisation of plant vs. mammal proteins reveals similar and idiosyncratic N-alpha acetylation features.</title>
        <authorList>
            <person name="Bienvenut W.V."/>
            <person name="Sumpton D."/>
            <person name="Martinez A."/>
            <person name="Lilla S."/>
            <person name="Espagne C."/>
            <person name="Meinnel T."/>
            <person name="Giglione C."/>
        </authorList>
    </citation>
    <scope>ACETYLATION [LARGE SCALE ANALYSIS] AT VAL-57</scope>
    <scope>CLEAVAGE OF TRANSIT PEPTIDE [LARGE SCALE ANALYSIS] AFTER SER-56</scope>
    <scope>IDENTIFICATION BY MASS SPECTROMETRY [LARGE SCALE ANALYSIS]</scope>
</reference>
<keyword id="KW-0007">Acetylation</keyword>
<keyword id="KW-0125">Carotenoid biosynthesis</keyword>
<keyword id="KW-0150">Chloroplast</keyword>
<keyword id="KW-0274">FAD</keyword>
<keyword id="KW-0285">Flavoprotein</keyword>
<keyword id="KW-0413">Isomerase</keyword>
<keyword id="KW-0472">Membrane</keyword>
<keyword id="KW-0520">NAD</keyword>
<keyword id="KW-0521">NADP</keyword>
<keyword id="KW-0934">Plastid</keyword>
<keyword id="KW-1185">Reference proteome</keyword>
<keyword id="KW-0809">Transit peptide</keyword>
<organism>
    <name type="scientific">Arabidopsis thaliana</name>
    <name type="common">Mouse-ear cress</name>
    <dbReference type="NCBI Taxonomy" id="3702"/>
    <lineage>
        <taxon>Eukaryota</taxon>
        <taxon>Viridiplantae</taxon>
        <taxon>Streptophyta</taxon>
        <taxon>Embryophyta</taxon>
        <taxon>Tracheophyta</taxon>
        <taxon>Spermatophyta</taxon>
        <taxon>Magnoliopsida</taxon>
        <taxon>eudicotyledons</taxon>
        <taxon>Gunneridae</taxon>
        <taxon>Pentapetalae</taxon>
        <taxon>rosids</taxon>
        <taxon>malvids</taxon>
        <taxon>Brassicales</taxon>
        <taxon>Brassicaceae</taxon>
        <taxon>Camelineae</taxon>
        <taxon>Arabidopsis</taxon>
    </lineage>
</organism>
<dbReference type="EC" id="5.2.1.13"/>
<dbReference type="EMBL" id="AC011001">
    <property type="protein sequence ID" value="AAF63149.1"/>
    <property type="status" value="ALT_SEQ"/>
    <property type="molecule type" value="Genomic_DNA"/>
</dbReference>
<dbReference type="EMBL" id="CP002684">
    <property type="protein sequence ID" value="AEE28042.1"/>
    <property type="molecule type" value="Genomic_DNA"/>
</dbReference>
<dbReference type="EMBL" id="BX813870">
    <property type="status" value="NOT_ANNOTATED_CDS"/>
    <property type="molecule type" value="mRNA"/>
</dbReference>
<dbReference type="PIR" id="A86203">
    <property type="entry name" value="A86203"/>
</dbReference>
<dbReference type="RefSeq" id="NP_172167.2">
    <property type="nucleotide sequence ID" value="NM_100559.4"/>
</dbReference>
<dbReference type="SMR" id="Q9M9Y8"/>
<dbReference type="BioGRID" id="22434">
    <property type="interactions" value="1"/>
</dbReference>
<dbReference type="FunCoup" id="Q9M9Y8">
    <property type="interactions" value="779"/>
</dbReference>
<dbReference type="STRING" id="3702.Q9M9Y8"/>
<dbReference type="iPTMnet" id="Q9M9Y8"/>
<dbReference type="PaxDb" id="3702-AT1G06820.1"/>
<dbReference type="ProteomicsDB" id="220335"/>
<dbReference type="EnsemblPlants" id="AT1G06820.1">
    <property type="protein sequence ID" value="AT1G06820.1"/>
    <property type="gene ID" value="AT1G06820"/>
</dbReference>
<dbReference type="GeneID" id="837193"/>
<dbReference type="Gramene" id="AT1G06820.1">
    <property type="protein sequence ID" value="AT1G06820.1"/>
    <property type="gene ID" value="AT1G06820"/>
</dbReference>
<dbReference type="KEGG" id="ath:AT1G06820"/>
<dbReference type="Araport" id="AT1G06820"/>
<dbReference type="TAIR" id="AT1G06820">
    <property type="gene designation" value="CRTISO"/>
</dbReference>
<dbReference type="eggNOG" id="KOG4254">
    <property type="taxonomic scope" value="Eukaryota"/>
</dbReference>
<dbReference type="HOGENOM" id="CLU_019722_4_1_1"/>
<dbReference type="InParanoid" id="Q9M9Y8"/>
<dbReference type="OMA" id="CWSVMPA"/>
<dbReference type="OrthoDB" id="7777654at2759"/>
<dbReference type="PhylomeDB" id="Q9M9Y8"/>
<dbReference type="BioCyc" id="ARA:AT1G06820-MONOMER"/>
<dbReference type="BioCyc" id="MetaCyc:AT1G06820-MONOMER"/>
<dbReference type="UniPathway" id="UPA00803"/>
<dbReference type="PRO" id="PR:Q9M9Y8"/>
<dbReference type="Proteomes" id="UP000006548">
    <property type="component" value="Chromosome 1"/>
</dbReference>
<dbReference type="ExpressionAtlas" id="Q9M9Y8">
    <property type="expression patterns" value="baseline and differential"/>
</dbReference>
<dbReference type="GO" id="GO:0031969">
    <property type="term" value="C:chloroplast membrane"/>
    <property type="evidence" value="ECO:0007669"/>
    <property type="project" value="UniProtKB-SubCell"/>
</dbReference>
<dbReference type="GO" id="GO:0046608">
    <property type="term" value="F:carotenoid isomerase activity"/>
    <property type="evidence" value="ECO:0000315"/>
    <property type="project" value="TAIR"/>
</dbReference>
<dbReference type="GO" id="GO:0016491">
    <property type="term" value="F:oxidoreductase activity"/>
    <property type="evidence" value="ECO:0007669"/>
    <property type="project" value="InterPro"/>
</dbReference>
<dbReference type="GO" id="GO:0016117">
    <property type="term" value="P:carotenoid biosynthetic process"/>
    <property type="evidence" value="ECO:0007669"/>
    <property type="project" value="UniProtKB-KW"/>
</dbReference>
<dbReference type="GO" id="GO:0009662">
    <property type="term" value="P:etioplast organization"/>
    <property type="evidence" value="ECO:0000315"/>
    <property type="project" value="TAIR"/>
</dbReference>
<dbReference type="FunFam" id="3.50.50.60:FF:000439">
    <property type="entry name" value="Prolycopene isomerase, chloroplastic"/>
    <property type="match status" value="1"/>
</dbReference>
<dbReference type="Gene3D" id="3.50.50.60">
    <property type="entry name" value="FAD/NAD(P)-binding domain"/>
    <property type="match status" value="2"/>
</dbReference>
<dbReference type="InterPro" id="IPR002937">
    <property type="entry name" value="Amino_oxidase"/>
</dbReference>
<dbReference type="InterPro" id="IPR014101">
    <property type="entry name" value="CrtISO"/>
</dbReference>
<dbReference type="InterPro" id="IPR045892">
    <property type="entry name" value="CrtISO-like"/>
</dbReference>
<dbReference type="InterPro" id="IPR036188">
    <property type="entry name" value="FAD/NAD-bd_sf"/>
</dbReference>
<dbReference type="NCBIfam" id="TIGR02730">
    <property type="entry name" value="carot_isom"/>
    <property type="match status" value="1"/>
</dbReference>
<dbReference type="PANTHER" id="PTHR46313">
    <property type="match status" value="1"/>
</dbReference>
<dbReference type="PANTHER" id="PTHR46313:SF3">
    <property type="entry name" value="PROLYCOPENE ISOMERASE, CHLOROPLASTIC"/>
    <property type="match status" value="1"/>
</dbReference>
<dbReference type="Pfam" id="PF01593">
    <property type="entry name" value="Amino_oxidase"/>
    <property type="match status" value="1"/>
</dbReference>
<dbReference type="SUPFAM" id="SSF51905">
    <property type="entry name" value="FAD/NAD(P)-binding domain"/>
    <property type="match status" value="1"/>
</dbReference>
<proteinExistence type="evidence at protein level"/>
<feature type="transit peptide" description="Chloroplast" evidence="4">
    <location>
        <begin position="1"/>
        <end position="56"/>
    </location>
</feature>
<feature type="chain" id="PRO_0000225670" description="Prolycopene isomerase, chloroplastic">
    <location>
        <begin position="57"/>
        <end position="595"/>
    </location>
</feature>
<feature type="modified residue" description="N-acetylvaline" evidence="4">
    <location>
        <position position="57"/>
    </location>
</feature>
<accession>Q9M9Y8</accession>
<comment type="function">
    <text evidence="2">Carotene cis-trans-isomerase that converts 7,9,9'-tri-cis-neurosporene to 9'-cis-neurosporene and 7,9,9',7'-tetra-cis-lycopene (also known as prolycopene) into all-trans-lycopene. Isomerization requires redox-active components, suggesting that isomerization is achieved by a reversible redox reaction acting at specific double bonds. Isomerizes adjacent cis-double bonds at C7 and C9 pairwise into the trans-configuration, but is incapable of isomerizing single cis-double bonds at C9 and C9'. Carotenoid biosynthesis is partly required to form the prolamellar bodies of etioplasts.</text>
</comment>
<comment type="catalytic activity">
    <reaction evidence="2">
        <text>7,7',9,9'-tetra-cis-lycopene = all-trans-lycopene</text>
        <dbReference type="Rhea" id="RHEA:30971"/>
        <dbReference type="ChEBI" id="CHEBI:15948"/>
        <dbReference type="ChEBI" id="CHEBI:62466"/>
        <dbReference type="EC" id="5.2.1.13"/>
    </reaction>
</comment>
<comment type="cofactor">
    <cofactor evidence="1">
        <name>NAD(+)</name>
        <dbReference type="ChEBI" id="CHEBI:57540"/>
    </cofactor>
    <cofactor evidence="1">
        <name>NADP(+)</name>
        <dbReference type="ChEBI" id="CHEBI:58349"/>
    </cofactor>
    <cofactor evidence="1">
        <name>FAD</name>
        <dbReference type="ChEBI" id="CHEBI:57692"/>
    </cofactor>
</comment>
<comment type="pathway">
    <text evidence="2">Carotenoid biosynthesis; lycopene biosynthesis.</text>
</comment>
<comment type="subcellular location">
    <subcellularLocation>
        <location evidence="1">Plastid</location>
        <location evidence="1">Chloroplast membrane</location>
        <topology evidence="1">Peripheral membrane protein</topology>
    </subcellularLocation>
</comment>
<comment type="similarity">
    <text evidence="3">Belongs to the carotenoid/retinoid oxidoreductase family. CrtISO subfamily.</text>
</comment>
<comment type="sequence caution" evidence="3">
    <conflict type="erroneous gene model prediction">
        <sequence resource="EMBL-CDS" id="AAF63149"/>
    </conflict>
</comment>